<reference key="1">
    <citation type="journal article" date="2002" name="Proc. Natl. Acad. Sci. U.S.A.">
        <title>Extensive mosaic structure revealed by the complete genome sequence of uropathogenic Escherichia coli.</title>
        <authorList>
            <person name="Welch R.A."/>
            <person name="Burland V."/>
            <person name="Plunkett G. III"/>
            <person name="Redford P."/>
            <person name="Roesch P."/>
            <person name="Rasko D."/>
            <person name="Buckles E.L."/>
            <person name="Liou S.-R."/>
            <person name="Boutin A."/>
            <person name="Hackett J."/>
            <person name="Stroud D."/>
            <person name="Mayhew G.F."/>
            <person name="Rose D.J."/>
            <person name="Zhou S."/>
            <person name="Schwartz D.C."/>
            <person name="Perna N.T."/>
            <person name="Mobley H.L.T."/>
            <person name="Donnenberg M.S."/>
            <person name="Blattner F.R."/>
        </authorList>
    </citation>
    <scope>NUCLEOTIDE SEQUENCE [LARGE SCALE GENOMIC DNA]</scope>
    <source>
        <strain>CFT073 / ATCC 700928 / UPEC</strain>
    </source>
</reference>
<dbReference type="EC" id="3.4.24.-" evidence="1"/>
<dbReference type="EMBL" id="AE014075">
    <property type="protein sequence ID" value="AAN81324.1"/>
    <property type="molecule type" value="Genomic_DNA"/>
</dbReference>
<dbReference type="RefSeq" id="WP_001043802.1">
    <property type="nucleotide sequence ID" value="NZ_CP051263.1"/>
</dbReference>
<dbReference type="SMR" id="Q8CVV4"/>
<dbReference type="STRING" id="199310.c2874"/>
<dbReference type="MEROPS" id="M74.001"/>
<dbReference type="KEGG" id="ecc:c2874"/>
<dbReference type="eggNOG" id="COG3770">
    <property type="taxonomic scope" value="Bacteria"/>
</dbReference>
<dbReference type="HOGENOM" id="CLU_052496_0_0_6"/>
<dbReference type="BioCyc" id="ECOL199310:C2874-MONOMER"/>
<dbReference type="Proteomes" id="UP000001410">
    <property type="component" value="Chromosome"/>
</dbReference>
<dbReference type="GO" id="GO:0030288">
    <property type="term" value="C:outer membrane-bounded periplasmic space"/>
    <property type="evidence" value="ECO:0007669"/>
    <property type="project" value="InterPro"/>
</dbReference>
<dbReference type="GO" id="GO:0046872">
    <property type="term" value="F:metal ion binding"/>
    <property type="evidence" value="ECO:0007669"/>
    <property type="project" value="UniProtKB-KW"/>
</dbReference>
<dbReference type="GO" id="GO:0004222">
    <property type="term" value="F:metalloendopeptidase activity"/>
    <property type="evidence" value="ECO:0007669"/>
    <property type="project" value="UniProtKB-UniRule"/>
</dbReference>
<dbReference type="GO" id="GO:0004252">
    <property type="term" value="F:serine-type endopeptidase activity"/>
    <property type="evidence" value="ECO:0007669"/>
    <property type="project" value="InterPro"/>
</dbReference>
<dbReference type="GO" id="GO:0000270">
    <property type="term" value="P:peptidoglycan metabolic process"/>
    <property type="evidence" value="ECO:0007669"/>
    <property type="project" value="UniProtKB-UniRule"/>
</dbReference>
<dbReference type="GO" id="GO:0006508">
    <property type="term" value="P:proteolysis"/>
    <property type="evidence" value="ECO:0007669"/>
    <property type="project" value="UniProtKB-KW"/>
</dbReference>
<dbReference type="FunFam" id="3.30.1380.10:FF:000002">
    <property type="entry name" value="Penicillin-insensitive murein endopeptidase"/>
    <property type="match status" value="1"/>
</dbReference>
<dbReference type="Gene3D" id="3.30.1380.10">
    <property type="match status" value="1"/>
</dbReference>
<dbReference type="HAMAP" id="MF_01623">
    <property type="entry name" value="MepA"/>
    <property type="match status" value="1"/>
</dbReference>
<dbReference type="InterPro" id="IPR009045">
    <property type="entry name" value="Hedgehog_sig/DD-Pept_Zn-bd_sf"/>
</dbReference>
<dbReference type="InterPro" id="IPR005073">
    <property type="entry name" value="Peptidase_M74"/>
</dbReference>
<dbReference type="NCBIfam" id="NF006947">
    <property type="entry name" value="PRK09429.1"/>
    <property type="match status" value="1"/>
</dbReference>
<dbReference type="Pfam" id="PF03411">
    <property type="entry name" value="Peptidase_M74"/>
    <property type="match status" value="1"/>
</dbReference>
<dbReference type="PIRSF" id="PIRSF018455">
    <property type="entry name" value="MepA"/>
    <property type="match status" value="1"/>
</dbReference>
<dbReference type="SUPFAM" id="SSF55166">
    <property type="entry name" value="Hedgehog/DD-peptidase"/>
    <property type="match status" value="1"/>
</dbReference>
<evidence type="ECO:0000255" key="1">
    <source>
        <dbReference type="HAMAP-Rule" id="MF_01623"/>
    </source>
</evidence>
<evidence type="ECO:0000256" key="2">
    <source>
        <dbReference type="SAM" id="MobiDB-lite"/>
    </source>
</evidence>
<proteinExistence type="inferred from homology"/>
<keyword id="KW-1015">Disulfide bond</keyword>
<keyword id="KW-0378">Hydrolase</keyword>
<keyword id="KW-0479">Metal-binding</keyword>
<keyword id="KW-0482">Metalloprotease</keyword>
<keyword id="KW-0574">Periplasm</keyword>
<keyword id="KW-0645">Protease</keyword>
<keyword id="KW-1185">Reference proteome</keyword>
<keyword id="KW-0732">Signal</keyword>
<keyword id="KW-0862">Zinc</keyword>
<sequence>MNKTAIALLALLASSASLAATPWQKITQPVPGSAQSIGSFSNGCIVGADTLPIQSEHYQVMRTDQRRYFGHPDLVMFIQRLSRQVSNLGMGTVLIGDMGMPAGGRFNGGHASHQTGLDVDIFLQLPKTRWTSAQLLRPQALDLVSRDGKHVVPALWKPEIFSLIKLAAQDKDVTRIFVNPAIKQQLCLDAGTDRDWLRKVRPWFQHRAHMHVRLRCPADSLECEDQPLPPPGDGCGAELQSWFEPPKPGTTKPEKKTPPPLPPSCQALLDEHVI</sequence>
<accession>Q8CVV4</accession>
<organism>
    <name type="scientific">Escherichia coli O6:H1 (strain CFT073 / ATCC 700928 / UPEC)</name>
    <dbReference type="NCBI Taxonomy" id="199310"/>
    <lineage>
        <taxon>Bacteria</taxon>
        <taxon>Pseudomonadati</taxon>
        <taxon>Pseudomonadota</taxon>
        <taxon>Gammaproteobacteria</taxon>
        <taxon>Enterobacterales</taxon>
        <taxon>Enterobacteriaceae</taxon>
        <taxon>Escherichia</taxon>
    </lineage>
</organism>
<feature type="signal peptide" evidence="1">
    <location>
        <begin position="1"/>
        <end position="19"/>
    </location>
</feature>
<feature type="chain" id="PRO_0000044577" description="Penicillin-insensitive murein endopeptidase">
    <location>
        <begin position="20"/>
        <end position="274"/>
    </location>
</feature>
<feature type="region of interest" description="Disordered" evidence="2">
    <location>
        <begin position="227"/>
        <end position="274"/>
    </location>
</feature>
<feature type="binding site" evidence="1">
    <location>
        <position position="110"/>
    </location>
    <ligand>
        <name>Zn(2+)</name>
        <dbReference type="ChEBI" id="CHEBI:29105"/>
        <label>1</label>
    </ligand>
</feature>
<feature type="binding site" evidence="1">
    <location>
        <position position="113"/>
    </location>
    <ligand>
        <name>Zn(2+)</name>
        <dbReference type="ChEBI" id="CHEBI:29105"/>
        <label>1</label>
    </ligand>
</feature>
<feature type="binding site" evidence="1">
    <location>
        <position position="120"/>
    </location>
    <ligand>
        <name>Zn(2+)</name>
        <dbReference type="ChEBI" id="CHEBI:29105"/>
        <label>1</label>
    </ligand>
</feature>
<feature type="binding site" evidence="1">
    <location>
        <position position="147"/>
    </location>
    <ligand>
        <name>Zn(2+)</name>
        <dbReference type="ChEBI" id="CHEBI:29105"/>
        <label>2</label>
    </ligand>
</feature>
<feature type="binding site" evidence="1">
    <location>
        <position position="150"/>
    </location>
    <ligand>
        <name>Zn(2+)</name>
        <dbReference type="ChEBI" id="CHEBI:29105"/>
        <label>2</label>
    </ligand>
</feature>
<feature type="binding site" evidence="1">
    <location>
        <position position="211"/>
    </location>
    <ligand>
        <name>Zn(2+)</name>
        <dbReference type="ChEBI" id="CHEBI:29105"/>
        <label>1</label>
    </ligand>
</feature>
<feature type="disulfide bond" evidence="1">
    <location>
        <begin position="44"/>
        <end position="265"/>
    </location>
</feature>
<feature type="disulfide bond" evidence="1">
    <location>
        <begin position="187"/>
        <end position="235"/>
    </location>
</feature>
<feature type="disulfide bond" evidence="1">
    <location>
        <begin position="216"/>
        <end position="223"/>
    </location>
</feature>
<comment type="function">
    <text evidence="1">Murein endopeptidase that cleaves the D-alanyl-meso-2,6-diamino-pimelyl amide bond that connects peptidoglycan strands. Likely plays a role in the removal of murein from the sacculus.</text>
</comment>
<comment type="cofactor">
    <cofactor evidence="1">
        <name>Zn(2+)</name>
        <dbReference type="ChEBI" id="CHEBI:29105"/>
    </cofactor>
    <text evidence="1">Binds 2 Zn(2+) ions per subunit. Zn(2+) ion 1 is bound in the active site. Zn(2+) ion 2 is bound at the dimer interface by residues from both subunits.</text>
</comment>
<comment type="subunit">
    <text evidence="1">Dimer.</text>
</comment>
<comment type="subcellular location">
    <subcellularLocation>
        <location evidence="1">Periplasm</location>
    </subcellularLocation>
</comment>
<comment type="similarity">
    <text evidence="1">Belongs to the peptidase M74 family.</text>
</comment>
<gene>
    <name evidence="1" type="primary">mepA</name>
    <name type="ordered locus">c2874</name>
</gene>
<protein>
    <recommendedName>
        <fullName evidence="1">Penicillin-insensitive murein endopeptidase</fullName>
        <ecNumber evidence="1">3.4.24.-</ecNumber>
    </recommendedName>
    <alternativeName>
        <fullName evidence="1">D-alanyl-D-alanine-endopeptidase</fullName>
        <shortName evidence="1">DD-endopeptidase</shortName>
    </alternativeName>
</protein>
<name>MEPA_ECOL6</name>